<keyword id="KW-1015">Disulfide bond</keyword>
<keyword id="KW-0873">Pyrrolidone carboxylic acid</keyword>
<keyword id="KW-0964">Secreted</keyword>
<keyword id="KW-0732">Signal</keyword>
<keyword id="KW-0800">Toxin</keyword>
<protein>
    <recommendedName>
        <fullName>Conotoxin Vx15a</fullName>
    </recommendedName>
</protein>
<proteinExistence type="evidence at transcript level"/>
<comment type="subcellular location">
    <subcellularLocation>
        <location evidence="1">Secreted</location>
    </subcellularLocation>
</comment>
<comment type="tissue specificity">
    <text>Expressed by the venom duct.</text>
</comment>
<comment type="domain">
    <text>The cysteine framework is XV (C-C-CC-C-C-C-C).</text>
</comment>
<comment type="PTM">
    <text evidence="1">Contains 4 disulfide bonds.</text>
</comment>
<comment type="similarity">
    <text evidence="3">Belongs to the conotoxin O2 superfamily.</text>
</comment>
<name>CO2FA_CONVX</name>
<sequence>MEKLTVLILVATVLLTIQVLAQSDGDKHLMKRSKQYATKRLSALMRGHRQCIPQNVSCEEDDECCSNLECKCTSAPDCNFPKCRA</sequence>
<reference key="1">
    <citation type="submission" date="2009-07" db="EMBL/GenBank/DDBJ databases">
        <title>A novel class of conotoxin cDNAs with a distinctive cysteine arrangement.</title>
        <authorList>
            <person name="Wang L."/>
            <person name="Jiang X."/>
            <person name="Wu Y."/>
            <person name="Zhou M."/>
            <person name="Xu A."/>
        </authorList>
    </citation>
    <scope>NUCLEOTIDE SEQUENCE [MRNA]</scope>
    <source>
        <tissue>Venom duct</tissue>
    </source>
</reference>
<feature type="signal peptide" evidence="2">
    <location>
        <begin position="1"/>
        <end position="23"/>
    </location>
</feature>
<feature type="propeptide" id="PRO_0000392194" evidence="1">
    <location>
        <begin position="24"/>
        <end position="49"/>
    </location>
</feature>
<feature type="peptide" id="PRO_0000392195" description="Conotoxin Vx15a">
    <location>
        <begin position="50"/>
        <end position="85"/>
    </location>
</feature>
<feature type="modified residue" description="Pyrrolidone carboxylic acid" evidence="1">
    <location>
        <position position="50"/>
    </location>
</feature>
<evidence type="ECO:0000250" key="1"/>
<evidence type="ECO:0000255" key="2"/>
<evidence type="ECO:0000305" key="3"/>
<organism>
    <name type="scientific">Conus vexillum</name>
    <name type="common">Flag cone</name>
    <dbReference type="NCBI Taxonomy" id="89431"/>
    <lineage>
        <taxon>Eukaryota</taxon>
        <taxon>Metazoa</taxon>
        <taxon>Spiralia</taxon>
        <taxon>Lophotrochozoa</taxon>
        <taxon>Mollusca</taxon>
        <taxon>Gastropoda</taxon>
        <taxon>Caenogastropoda</taxon>
        <taxon>Neogastropoda</taxon>
        <taxon>Conoidea</taxon>
        <taxon>Conidae</taxon>
        <taxon>Conus</taxon>
        <taxon>Rhizoconus</taxon>
    </lineage>
</organism>
<dbReference type="EMBL" id="GQ414742">
    <property type="protein sequence ID" value="ACV07672.1"/>
    <property type="molecule type" value="mRNA"/>
</dbReference>
<dbReference type="SMR" id="C8CK79"/>
<dbReference type="ConoServer" id="3865">
    <property type="toxin name" value="Vx15a precursor"/>
</dbReference>
<dbReference type="GO" id="GO:0005576">
    <property type="term" value="C:extracellular region"/>
    <property type="evidence" value="ECO:0007669"/>
    <property type="project" value="UniProtKB-SubCell"/>
</dbReference>
<dbReference type="GO" id="GO:0008200">
    <property type="term" value="F:ion channel inhibitor activity"/>
    <property type="evidence" value="ECO:0007669"/>
    <property type="project" value="InterPro"/>
</dbReference>
<dbReference type="GO" id="GO:0090729">
    <property type="term" value="F:toxin activity"/>
    <property type="evidence" value="ECO:0007669"/>
    <property type="project" value="UniProtKB-KW"/>
</dbReference>
<dbReference type="InterPro" id="IPR004214">
    <property type="entry name" value="Conotoxin"/>
</dbReference>
<dbReference type="Pfam" id="PF02950">
    <property type="entry name" value="Conotoxin"/>
    <property type="match status" value="1"/>
</dbReference>
<accession>C8CK79</accession>